<sequence>MADFEGGGDDGGYEEFDEGGGFEEEYVEETETTEAYTDIIDPSADANTAEAGRIPNHLRKTTRYMTKYERARLLGSRALQISMNAPIMVELEGETDPLQIAWKELRAKKIPLIIRRFLPNGMYEDWSVDELSI</sequence>
<reference key="1">
    <citation type="journal article" date="2005" name="Nature">
        <title>The genome of the social amoeba Dictyostelium discoideum.</title>
        <authorList>
            <person name="Eichinger L."/>
            <person name="Pachebat J.A."/>
            <person name="Gloeckner G."/>
            <person name="Rajandream M.A."/>
            <person name="Sucgang R."/>
            <person name="Berriman M."/>
            <person name="Song J."/>
            <person name="Olsen R."/>
            <person name="Szafranski K."/>
            <person name="Xu Q."/>
            <person name="Tunggal B."/>
            <person name="Kummerfeld S."/>
            <person name="Madera M."/>
            <person name="Konfortov B.A."/>
            <person name="Rivero F."/>
            <person name="Bankier A.T."/>
            <person name="Lehmann R."/>
            <person name="Hamlin N."/>
            <person name="Davies R."/>
            <person name="Gaudet P."/>
            <person name="Fey P."/>
            <person name="Pilcher K."/>
            <person name="Chen G."/>
            <person name="Saunders D."/>
            <person name="Sodergren E.J."/>
            <person name="Davis P."/>
            <person name="Kerhornou A."/>
            <person name="Nie X."/>
            <person name="Hall N."/>
            <person name="Anjard C."/>
            <person name="Hemphill L."/>
            <person name="Bason N."/>
            <person name="Farbrother P."/>
            <person name="Desany B."/>
            <person name="Just E."/>
            <person name="Morio T."/>
            <person name="Rost R."/>
            <person name="Churcher C.M."/>
            <person name="Cooper J."/>
            <person name="Haydock S."/>
            <person name="van Driessche N."/>
            <person name="Cronin A."/>
            <person name="Goodhead I."/>
            <person name="Muzny D.M."/>
            <person name="Mourier T."/>
            <person name="Pain A."/>
            <person name="Lu M."/>
            <person name="Harper D."/>
            <person name="Lindsay R."/>
            <person name="Hauser H."/>
            <person name="James K.D."/>
            <person name="Quiles M."/>
            <person name="Madan Babu M."/>
            <person name="Saito T."/>
            <person name="Buchrieser C."/>
            <person name="Wardroper A."/>
            <person name="Felder M."/>
            <person name="Thangavelu M."/>
            <person name="Johnson D."/>
            <person name="Knights A."/>
            <person name="Loulseged H."/>
            <person name="Mungall K.L."/>
            <person name="Oliver K."/>
            <person name="Price C."/>
            <person name="Quail M.A."/>
            <person name="Urushihara H."/>
            <person name="Hernandez J."/>
            <person name="Rabbinowitsch E."/>
            <person name="Steffen D."/>
            <person name="Sanders M."/>
            <person name="Ma J."/>
            <person name="Kohara Y."/>
            <person name="Sharp S."/>
            <person name="Simmonds M.N."/>
            <person name="Spiegler S."/>
            <person name="Tivey A."/>
            <person name="Sugano S."/>
            <person name="White B."/>
            <person name="Walker D."/>
            <person name="Woodward J.R."/>
            <person name="Winckler T."/>
            <person name="Tanaka Y."/>
            <person name="Shaulsky G."/>
            <person name="Schleicher M."/>
            <person name="Weinstock G.M."/>
            <person name="Rosenthal A."/>
            <person name="Cox E.C."/>
            <person name="Chisholm R.L."/>
            <person name="Gibbs R.A."/>
            <person name="Loomis W.F."/>
            <person name="Platzer M."/>
            <person name="Kay R.R."/>
            <person name="Williams J.G."/>
            <person name="Dear P.H."/>
            <person name="Noegel A.A."/>
            <person name="Barrell B.G."/>
            <person name="Kuspa A."/>
        </authorList>
    </citation>
    <scope>NUCLEOTIDE SEQUENCE [LARGE SCALE GENOMIC DNA]</scope>
    <source>
        <strain>AX4</strain>
    </source>
</reference>
<feature type="chain" id="PRO_0000331602" description="DNA-directed RNA polymerases I, II, and III subunit rpabc2">
    <location>
        <begin position="1"/>
        <end position="133"/>
    </location>
</feature>
<feature type="region of interest" description="Disordered" evidence="2">
    <location>
        <begin position="1"/>
        <end position="55"/>
    </location>
</feature>
<feature type="compositionally biased region" description="Acidic residues" evidence="2">
    <location>
        <begin position="1"/>
        <end position="32"/>
    </location>
</feature>
<comment type="function">
    <text evidence="1">DNA-dependent RNA polymerases catalyze the transcription of DNA into RNA using the four ribonucleoside triphosphates as substrates. Common component of RNA polymerases I, II and III which synthesize ribosomal RNA precursors, mRNA precursors and many functional non-coding RNAs, and small RNAs, such as 5S rRNA and tRNAs, respectively. Pol II is the central component of the basal RNA polymerase II transcription machinery. Pols are composed of mobile elements that move relative to each other. In Pol II, RPB6 is part of the clamp element and together with parts of RPB1 and RPB2 forms a pocket to which the RPB4-RPB7 subcomplex binds (By similarity).</text>
</comment>
<comment type="subunit">
    <text evidence="1">Component of the RNA polymerase I (Pol I), RNA polymerase II (Pol II) and RNA polymerase III (Pol III) complexes consisting of at least 13, 12 and 17 subunits, respectively.</text>
</comment>
<comment type="subcellular location">
    <subcellularLocation>
        <location evidence="1">Nucleus</location>
    </subcellularLocation>
</comment>
<comment type="similarity">
    <text evidence="3">Belongs to the archaeal Rpo6/eukaryotic RPB6 RNA polymerase subunit family.</text>
</comment>
<dbReference type="EMBL" id="AAFI02000174">
    <property type="protein sequence ID" value="EAL61949.1"/>
    <property type="molecule type" value="Genomic_DNA"/>
</dbReference>
<dbReference type="RefSeq" id="XP_635429.1">
    <property type="nucleotide sequence ID" value="XM_630337.1"/>
</dbReference>
<dbReference type="SMR" id="Q54FA8"/>
<dbReference type="FunCoup" id="Q54FA8">
    <property type="interactions" value="563"/>
</dbReference>
<dbReference type="STRING" id="44689.Q54FA8"/>
<dbReference type="PaxDb" id="44689-DDB0216272"/>
<dbReference type="EnsemblProtists" id="EAL61949">
    <property type="protein sequence ID" value="EAL61949"/>
    <property type="gene ID" value="DDB_G0291037"/>
</dbReference>
<dbReference type="GeneID" id="8627930"/>
<dbReference type="KEGG" id="ddi:DDB_G0291037"/>
<dbReference type="dictyBase" id="DDB_G0291037">
    <property type="gene designation" value="rpb6"/>
</dbReference>
<dbReference type="VEuPathDB" id="AmoebaDB:DDB_G0291037"/>
<dbReference type="eggNOG" id="KOG3405">
    <property type="taxonomic scope" value="Eukaryota"/>
</dbReference>
<dbReference type="HOGENOM" id="CLU_112527_2_0_1"/>
<dbReference type="InParanoid" id="Q54FA8"/>
<dbReference type="OMA" id="WHVNELE"/>
<dbReference type="PhylomeDB" id="Q54FA8"/>
<dbReference type="Reactome" id="R-DDI-113418">
    <property type="pathway name" value="Formation of the Early Elongation Complex"/>
</dbReference>
<dbReference type="Reactome" id="R-DDI-674695">
    <property type="pathway name" value="RNA Polymerase II Pre-transcription Events"/>
</dbReference>
<dbReference type="Reactome" id="R-DDI-6781823">
    <property type="pathway name" value="Formation of TC-NER Pre-Incision Complex"/>
</dbReference>
<dbReference type="Reactome" id="R-DDI-6782135">
    <property type="pathway name" value="Dual incision in TC-NER"/>
</dbReference>
<dbReference type="Reactome" id="R-DDI-6782210">
    <property type="pathway name" value="Gap-filling DNA repair synthesis and ligation in TC-NER"/>
</dbReference>
<dbReference type="Reactome" id="R-DDI-6796648">
    <property type="pathway name" value="TP53 Regulates Transcription of DNA Repair Genes"/>
</dbReference>
<dbReference type="Reactome" id="R-DDI-6807505">
    <property type="pathway name" value="RNA polymerase II transcribes snRNA genes"/>
</dbReference>
<dbReference type="Reactome" id="R-DDI-72086">
    <property type="pathway name" value="mRNA Capping"/>
</dbReference>
<dbReference type="Reactome" id="R-DDI-72163">
    <property type="pathway name" value="mRNA Splicing - Major Pathway"/>
</dbReference>
<dbReference type="Reactome" id="R-DDI-72203">
    <property type="pathway name" value="Processing of Capped Intron-Containing Pre-mRNA"/>
</dbReference>
<dbReference type="Reactome" id="R-DDI-73762">
    <property type="pathway name" value="RNA Polymerase I Transcription Initiation"/>
</dbReference>
<dbReference type="Reactome" id="R-DDI-73772">
    <property type="pathway name" value="RNA Polymerase I Promoter Escape"/>
</dbReference>
<dbReference type="Reactome" id="R-DDI-73776">
    <property type="pathway name" value="RNA Polymerase II Promoter Escape"/>
</dbReference>
<dbReference type="Reactome" id="R-DDI-73779">
    <property type="pathway name" value="RNA Polymerase II Transcription Pre-Initiation And Promoter Opening"/>
</dbReference>
<dbReference type="Reactome" id="R-DDI-75953">
    <property type="pathway name" value="RNA Polymerase II Transcription Initiation"/>
</dbReference>
<dbReference type="Reactome" id="R-DDI-76042">
    <property type="pathway name" value="RNA Polymerase II Transcription Initiation And Promoter Clearance"/>
</dbReference>
<dbReference type="Reactome" id="R-DDI-76061">
    <property type="pathway name" value="RNA Polymerase III Transcription Initiation From Type 1 Promoter"/>
</dbReference>
<dbReference type="Reactome" id="R-DDI-76066">
    <property type="pathway name" value="RNA Polymerase III Transcription Initiation From Type 2 Promoter"/>
</dbReference>
<dbReference type="Reactome" id="R-DDI-77075">
    <property type="pathway name" value="RNA Pol II CTD phosphorylation and interaction with CE"/>
</dbReference>
<dbReference type="Reactome" id="R-DDI-9018519">
    <property type="pathway name" value="Estrogen-dependent gene expression"/>
</dbReference>
<dbReference type="PRO" id="PR:Q54FA8"/>
<dbReference type="Proteomes" id="UP000002195">
    <property type="component" value="Chromosome 5"/>
</dbReference>
<dbReference type="GO" id="GO:0005736">
    <property type="term" value="C:RNA polymerase I complex"/>
    <property type="evidence" value="ECO:0000318"/>
    <property type="project" value="GO_Central"/>
</dbReference>
<dbReference type="GO" id="GO:0005665">
    <property type="term" value="C:RNA polymerase II, core complex"/>
    <property type="evidence" value="ECO:0000318"/>
    <property type="project" value="GO_Central"/>
</dbReference>
<dbReference type="GO" id="GO:0005666">
    <property type="term" value="C:RNA polymerase III complex"/>
    <property type="evidence" value="ECO:0000318"/>
    <property type="project" value="GO_Central"/>
</dbReference>
<dbReference type="GO" id="GO:0003677">
    <property type="term" value="F:DNA binding"/>
    <property type="evidence" value="ECO:0007669"/>
    <property type="project" value="InterPro"/>
</dbReference>
<dbReference type="GO" id="GO:0003899">
    <property type="term" value="F:DNA-directed RNA polymerase activity"/>
    <property type="evidence" value="ECO:0007669"/>
    <property type="project" value="InterPro"/>
</dbReference>
<dbReference type="GO" id="GO:0006360">
    <property type="term" value="P:transcription by RNA polymerase I"/>
    <property type="evidence" value="ECO:0000318"/>
    <property type="project" value="GO_Central"/>
</dbReference>
<dbReference type="GO" id="GO:0006366">
    <property type="term" value="P:transcription by RNA polymerase II"/>
    <property type="evidence" value="ECO:0000318"/>
    <property type="project" value="GO_Central"/>
</dbReference>
<dbReference type="GO" id="GO:0042797">
    <property type="term" value="P:tRNA transcription by RNA polymerase III"/>
    <property type="evidence" value="ECO:0000318"/>
    <property type="project" value="GO_Central"/>
</dbReference>
<dbReference type="Gene3D" id="3.90.940.10">
    <property type="match status" value="1"/>
</dbReference>
<dbReference type="InterPro" id="IPR020708">
    <property type="entry name" value="DNA-dir_RNA_polK_14-18kDa_CS"/>
</dbReference>
<dbReference type="InterPro" id="IPR006110">
    <property type="entry name" value="Pol_omega/Rpo6/RPB6"/>
</dbReference>
<dbReference type="InterPro" id="IPR028363">
    <property type="entry name" value="RPB6"/>
</dbReference>
<dbReference type="InterPro" id="IPR036161">
    <property type="entry name" value="RPB6/omega-like_sf"/>
</dbReference>
<dbReference type="InterPro" id="IPR006111">
    <property type="entry name" value="Rpo6/Rpb6"/>
</dbReference>
<dbReference type="NCBIfam" id="NF002208">
    <property type="entry name" value="PRK01099.1-3"/>
    <property type="match status" value="1"/>
</dbReference>
<dbReference type="PANTHER" id="PTHR47227">
    <property type="entry name" value="DNA-DIRECTED RNA POLYMERASE SUBUNIT K"/>
    <property type="match status" value="1"/>
</dbReference>
<dbReference type="PANTHER" id="PTHR47227:SF5">
    <property type="entry name" value="DNA-DIRECTED RNA POLYMERASES I, II, AND III SUBUNIT RPABC2"/>
    <property type="match status" value="1"/>
</dbReference>
<dbReference type="Pfam" id="PF01192">
    <property type="entry name" value="RNA_pol_Rpb6"/>
    <property type="match status" value="1"/>
</dbReference>
<dbReference type="PIRSF" id="PIRSF500154">
    <property type="entry name" value="RPB6"/>
    <property type="match status" value="1"/>
</dbReference>
<dbReference type="PIRSF" id="PIRSF000778">
    <property type="entry name" value="RpoK/RPB6"/>
    <property type="match status" value="1"/>
</dbReference>
<dbReference type="SMART" id="SM01409">
    <property type="entry name" value="RNA_pol_Rpb6"/>
    <property type="match status" value="1"/>
</dbReference>
<dbReference type="SUPFAM" id="SSF63562">
    <property type="entry name" value="RPB6/omega subunit-like"/>
    <property type="match status" value="1"/>
</dbReference>
<dbReference type="PROSITE" id="PS01111">
    <property type="entry name" value="RNA_POL_K_14KD"/>
    <property type="match status" value="1"/>
</dbReference>
<name>RPAB2_DICDI</name>
<gene>
    <name type="primary">polr2f</name>
    <name type="synonym">rpb6</name>
    <name type="ORF">DDB_G0291037</name>
</gene>
<keyword id="KW-0240">DNA-directed RNA polymerase</keyword>
<keyword id="KW-0539">Nucleus</keyword>
<keyword id="KW-1185">Reference proteome</keyword>
<keyword id="KW-0804">Transcription</keyword>
<proteinExistence type="inferred from homology"/>
<evidence type="ECO:0000250" key="1"/>
<evidence type="ECO:0000256" key="2">
    <source>
        <dbReference type="SAM" id="MobiDB-lite"/>
    </source>
</evidence>
<evidence type="ECO:0000305" key="3"/>
<protein>
    <recommendedName>
        <fullName>DNA-directed RNA polymerases I, II, and III subunit rpabc2</fullName>
        <shortName>RNA polymerases I, II, and III subunit ABC2</shortName>
    </recommendedName>
    <alternativeName>
        <fullName>DNA-directed RNA polymerase II subunit F</fullName>
    </alternativeName>
    <alternativeName>
        <fullName>RPB6 homolog</fullName>
    </alternativeName>
</protein>
<organism>
    <name type="scientific">Dictyostelium discoideum</name>
    <name type="common">Social amoeba</name>
    <dbReference type="NCBI Taxonomy" id="44689"/>
    <lineage>
        <taxon>Eukaryota</taxon>
        <taxon>Amoebozoa</taxon>
        <taxon>Evosea</taxon>
        <taxon>Eumycetozoa</taxon>
        <taxon>Dictyostelia</taxon>
        <taxon>Dictyosteliales</taxon>
        <taxon>Dictyosteliaceae</taxon>
        <taxon>Dictyostelium</taxon>
    </lineage>
</organism>
<accession>Q54FA8</accession>